<protein>
    <recommendedName>
        <fullName evidence="1">Chorismate synthase</fullName>
        <shortName evidence="1">CS</shortName>
        <ecNumber evidence="1">4.2.3.5</ecNumber>
    </recommendedName>
    <alternativeName>
        <fullName evidence="1">5-enolpyruvylshikimate-3-phosphate phospholyase</fullName>
    </alternativeName>
</protein>
<name>AROC_GEOUR</name>
<keyword id="KW-0028">Amino-acid biosynthesis</keyword>
<keyword id="KW-0057">Aromatic amino acid biosynthesis</keyword>
<keyword id="KW-0274">FAD</keyword>
<keyword id="KW-0285">Flavoprotein</keyword>
<keyword id="KW-0288">FMN</keyword>
<keyword id="KW-0456">Lyase</keyword>
<keyword id="KW-0521">NADP</keyword>
<keyword id="KW-1185">Reference proteome</keyword>
<gene>
    <name evidence="1" type="primary">aroC</name>
    <name type="ordered locus">Gura_1818</name>
</gene>
<reference key="1">
    <citation type="submission" date="2007-05" db="EMBL/GenBank/DDBJ databases">
        <title>Complete sequence of Geobacter uraniireducens Rf4.</title>
        <authorList>
            <consortium name="US DOE Joint Genome Institute"/>
            <person name="Copeland A."/>
            <person name="Lucas S."/>
            <person name="Lapidus A."/>
            <person name="Barry K."/>
            <person name="Detter J.C."/>
            <person name="Glavina del Rio T."/>
            <person name="Hammon N."/>
            <person name="Israni S."/>
            <person name="Dalin E."/>
            <person name="Tice H."/>
            <person name="Pitluck S."/>
            <person name="Chertkov O."/>
            <person name="Brettin T."/>
            <person name="Bruce D."/>
            <person name="Han C."/>
            <person name="Schmutz J."/>
            <person name="Larimer F."/>
            <person name="Land M."/>
            <person name="Hauser L."/>
            <person name="Kyrpides N."/>
            <person name="Mikhailova N."/>
            <person name="Shelobolina E."/>
            <person name="Aklujkar M."/>
            <person name="Lovley D."/>
            <person name="Richardson P."/>
        </authorList>
    </citation>
    <scope>NUCLEOTIDE SEQUENCE [LARGE SCALE GENOMIC DNA]</scope>
    <source>
        <strain>ATCC BAA-1134 / JCM 13001 / Rf4</strain>
    </source>
</reference>
<comment type="function">
    <text evidence="1">Catalyzes the anti-1,4-elimination of the C-3 phosphate and the C-6 proR hydrogen from 5-enolpyruvylshikimate-3-phosphate (EPSP) to yield chorismate, which is the branch point compound that serves as the starting substrate for the three terminal pathways of aromatic amino acid biosynthesis. This reaction introduces a second double bond into the aromatic ring system.</text>
</comment>
<comment type="catalytic activity">
    <reaction evidence="1">
        <text>5-O-(1-carboxyvinyl)-3-phosphoshikimate = chorismate + phosphate</text>
        <dbReference type="Rhea" id="RHEA:21020"/>
        <dbReference type="ChEBI" id="CHEBI:29748"/>
        <dbReference type="ChEBI" id="CHEBI:43474"/>
        <dbReference type="ChEBI" id="CHEBI:57701"/>
        <dbReference type="EC" id="4.2.3.5"/>
    </reaction>
</comment>
<comment type="cofactor">
    <cofactor evidence="1">
        <name>FMNH2</name>
        <dbReference type="ChEBI" id="CHEBI:57618"/>
    </cofactor>
    <text evidence="1">Reduced FMN (FMNH(2)).</text>
</comment>
<comment type="pathway">
    <text evidence="1">Metabolic intermediate biosynthesis; chorismate biosynthesis; chorismate from D-erythrose 4-phosphate and phosphoenolpyruvate: step 7/7.</text>
</comment>
<comment type="subunit">
    <text evidence="1">Homotetramer.</text>
</comment>
<comment type="similarity">
    <text evidence="1">Belongs to the chorismate synthase family.</text>
</comment>
<accession>A5GF03</accession>
<sequence>MFRYLTAGESHGPQLTAIIEGIPAGLSLSEEQINIDLARRQCGYGRGGRMLIEKDQVEILSGVRWGKTIGSPITLCVRNRDWENWHEKMSPHERFHDDKIRVTRSRPGHADLPGAMKYNHHDVRNILERSSARETAVRVAVGAVAKALLSQFEIEVCGFVAELGGIKAIRPSLPLAALKDMAAKSELFTYDKSVEEEMKRLIDTVRDEGDTVGGVIEVNAVGVPPGLGSHVQWDRKLDARLAMAVLSIQAFKGVEIGIGFQAAASTGSKVHDEIFYDSARIAHGEQSGFYRKSNNAGGIEGGISNGEEIVVRAAMKPIPTLYKPLRSVDIVSKEPYEATVERSDVCAVPAASVVAEAVVAIELADAFMVKFGGDSITEIKRNYQSYLDYLRAF</sequence>
<proteinExistence type="inferred from homology"/>
<organism>
    <name type="scientific">Geotalea uraniireducens (strain Rf4)</name>
    <name type="common">Geobacter uraniireducens</name>
    <dbReference type="NCBI Taxonomy" id="351605"/>
    <lineage>
        <taxon>Bacteria</taxon>
        <taxon>Pseudomonadati</taxon>
        <taxon>Thermodesulfobacteriota</taxon>
        <taxon>Desulfuromonadia</taxon>
        <taxon>Geobacterales</taxon>
        <taxon>Geobacteraceae</taxon>
        <taxon>Geotalea</taxon>
    </lineage>
</organism>
<dbReference type="EC" id="4.2.3.5" evidence="1"/>
<dbReference type="EMBL" id="CP000698">
    <property type="protein sequence ID" value="ABQ26008.1"/>
    <property type="molecule type" value="Genomic_DNA"/>
</dbReference>
<dbReference type="RefSeq" id="WP_011938713.1">
    <property type="nucleotide sequence ID" value="NC_009483.1"/>
</dbReference>
<dbReference type="SMR" id="A5GF03"/>
<dbReference type="STRING" id="351605.Gura_1818"/>
<dbReference type="KEGG" id="gur:Gura_1818"/>
<dbReference type="HOGENOM" id="CLU_034547_2_0_7"/>
<dbReference type="OrthoDB" id="9771806at2"/>
<dbReference type="UniPathway" id="UPA00053">
    <property type="reaction ID" value="UER00090"/>
</dbReference>
<dbReference type="Proteomes" id="UP000006695">
    <property type="component" value="Chromosome"/>
</dbReference>
<dbReference type="GO" id="GO:0005829">
    <property type="term" value="C:cytosol"/>
    <property type="evidence" value="ECO:0007669"/>
    <property type="project" value="TreeGrafter"/>
</dbReference>
<dbReference type="GO" id="GO:0004107">
    <property type="term" value="F:chorismate synthase activity"/>
    <property type="evidence" value="ECO:0007669"/>
    <property type="project" value="UniProtKB-UniRule"/>
</dbReference>
<dbReference type="GO" id="GO:0010181">
    <property type="term" value="F:FMN binding"/>
    <property type="evidence" value="ECO:0007669"/>
    <property type="project" value="TreeGrafter"/>
</dbReference>
<dbReference type="GO" id="GO:0008652">
    <property type="term" value="P:amino acid biosynthetic process"/>
    <property type="evidence" value="ECO:0007669"/>
    <property type="project" value="UniProtKB-KW"/>
</dbReference>
<dbReference type="GO" id="GO:0009073">
    <property type="term" value="P:aromatic amino acid family biosynthetic process"/>
    <property type="evidence" value="ECO:0007669"/>
    <property type="project" value="UniProtKB-KW"/>
</dbReference>
<dbReference type="GO" id="GO:0009423">
    <property type="term" value="P:chorismate biosynthetic process"/>
    <property type="evidence" value="ECO:0007669"/>
    <property type="project" value="UniProtKB-UniRule"/>
</dbReference>
<dbReference type="CDD" id="cd07304">
    <property type="entry name" value="Chorismate_synthase"/>
    <property type="match status" value="1"/>
</dbReference>
<dbReference type="FunFam" id="3.60.150.10:FF:000002">
    <property type="entry name" value="Chorismate synthase"/>
    <property type="match status" value="1"/>
</dbReference>
<dbReference type="Gene3D" id="3.60.150.10">
    <property type="entry name" value="Chorismate synthase AroC"/>
    <property type="match status" value="1"/>
</dbReference>
<dbReference type="HAMAP" id="MF_00300">
    <property type="entry name" value="Chorismate_synth"/>
    <property type="match status" value="1"/>
</dbReference>
<dbReference type="InterPro" id="IPR000453">
    <property type="entry name" value="Chorismate_synth"/>
</dbReference>
<dbReference type="InterPro" id="IPR035904">
    <property type="entry name" value="Chorismate_synth_AroC_sf"/>
</dbReference>
<dbReference type="InterPro" id="IPR020541">
    <property type="entry name" value="Chorismate_synthase_CS"/>
</dbReference>
<dbReference type="NCBIfam" id="TIGR00033">
    <property type="entry name" value="aroC"/>
    <property type="match status" value="1"/>
</dbReference>
<dbReference type="NCBIfam" id="NF003793">
    <property type="entry name" value="PRK05382.1"/>
    <property type="match status" value="1"/>
</dbReference>
<dbReference type="PANTHER" id="PTHR21085">
    <property type="entry name" value="CHORISMATE SYNTHASE"/>
    <property type="match status" value="1"/>
</dbReference>
<dbReference type="PANTHER" id="PTHR21085:SF0">
    <property type="entry name" value="CHORISMATE SYNTHASE"/>
    <property type="match status" value="1"/>
</dbReference>
<dbReference type="Pfam" id="PF01264">
    <property type="entry name" value="Chorismate_synt"/>
    <property type="match status" value="1"/>
</dbReference>
<dbReference type="PIRSF" id="PIRSF001456">
    <property type="entry name" value="Chorismate_synth"/>
    <property type="match status" value="1"/>
</dbReference>
<dbReference type="SUPFAM" id="SSF103263">
    <property type="entry name" value="Chorismate synthase, AroC"/>
    <property type="match status" value="1"/>
</dbReference>
<dbReference type="PROSITE" id="PS00787">
    <property type="entry name" value="CHORISMATE_SYNTHASE_1"/>
    <property type="match status" value="1"/>
</dbReference>
<dbReference type="PROSITE" id="PS00788">
    <property type="entry name" value="CHORISMATE_SYNTHASE_2"/>
    <property type="match status" value="1"/>
</dbReference>
<dbReference type="PROSITE" id="PS00789">
    <property type="entry name" value="CHORISMATE_SYNTHASE_3"/>
    <property type="match status" value="1"/>
</dbReference>
<evidence type="ECO:0000255" key="1">
    <source>
        <dbReference type="HAMAP-Rule" id="MF_00300"/>
    </source>
</evidence>
<feature type="chain" id="PRO_1000078995" description="Chorismate synthase">
    <location>
        <begin position="1"/>
        <end position="393"/>
    </location>
</feature>
<feature type="binding site" evidence="1">
    <location>
        <position position="40"/>
    </location>
    <ligand>
        <name>NADP(+)</name>
        <dbReference type="ChEBI" id="CHEBI:58349"/>
    </ligand>
</feature>
<feature type="binding site" evidence="1">
    <location>
        <position position="46"/>
    </location>
    <ligand>
        <name>NADP(+)</name>
        <dbReference type="ChEBI" id="CHEBI:58349"/>
    </ligand>
</feature>
<feature type="binding site" evidence="1">
    <location>
        <begin position="129"/>
        <end position="131"/>
    </location>
    <ligand>
        <name>FMN</name>
        <dbReference type="ChEBI" id="CHEBI:58210"/>
    </ligand>
</feature>
<feature type="binding site" evidence="1">
    <location>
        <begin position="249"/>
        <end position="250"/>
    </location>
    <ligand>
        <name>FMN</name>
        <dbReference type="ChEBI" id="CHEBI:58210"/>
    </ligand>
</feature>
<feature type="binding site" evidence="1">
    <location>
        <position position="301"/>
    </location>
    <ligand>
        <name>FMN</name>
        <dbReference type="ChEBI" id="CHEBI:58210"/>
    </ligand>
</feature>
<feature type="binding site" evidence="1">
    <location>
        <begin position="316"/>
        <end position="320"/>
    </location>
    <ligand>
        <name>FMN</name>
        <dbReference type="ChEBI" id="CHEBI:58210"/>
    </ligand>
</feature>
<feature type="binding site" evidence="1">
    <location>
        <position position="342"/>
    </location>
    <ligand>
        <name>FMN</name>
        <dbReference type="ChEBI" id="CHEBI:58210"/>
    </ligand>
</feature>